<dbReference type="EMBL" id="AL445563">
    <property type="protein sequence ID" value="CAC13426.1"/>
    <property type="molecule type" value="Genomic_DNA"/>
</dbReference>
<dbReference type="PIR" id="E90543">
    <property type="entry name" value="E90543"/>
</dbReference>
<dbReference type="RefSeq" id="WP_010925057.1">
    <property type="nucleotide sequence ID" value="NC_002771.1"/>
</dbReference>
<dbReference type="SMR" id="Q98QV8"/>
<dbReference type="STRING" id="272635.gene:17576843"/>
<dbReference type="KEGG" id="mpu:MYPU_2530"/>
<dbReference type="eggNOG" id="COG0445">
    <property type="taxonomic scope" value="Bacteria"/>
</dbReference>
<dbReference type="HOGENOM" id="CLU_007831_2_2_14"/>
<dbReference type="BioCyc" id="MPUL272635:G1GT6-254-MONOMER"/>
<dbReference type="Proteomes" id="UP000000528">
    <property type="component" value="Chromosome"/>
</dbReference>
<dbReference type="GO" id="GO:0005829">
    <property type="term" value="C:cytosol"/>
    <property type="evidence" value="ECO:0007669"/>
    <property type="project" value="TreeGrafter"/>
</dbReference>
<dbReference type="GO" id="GO:0050660">
    <property type="term" value="F:flavin adenine dinucleotide binding"/>
    <property type="evidence" value="ECO:0007669"/>
    <property type="project" value="UniProtKB-UniRule"/>
</dbReference>
<dbReference type="GO" id="GO:0030488">
    <property type="term" value="P:tRNA methylation"/>
    <property type="evidence" value="ECO:0007669"/>
    <property type="project" value="TreeGrafter"/>
</dbReference>
<dbReference type="GO" id="GO:0002098">
    <property type="term" value="P:tRNA wobble uridine modification"/>
    <property type="evidence" value="ECO:0007669"/>
    <property type="project" value="InterPro"/>
</dbReference>
<dbReference type="FunFam" id="1.10.150.570:FF:000001">
    <property type="entry name" value="tRNA uridine 5-carboxymethylaminomethyl modification enzyme MnmG"/>
    <property type="match status" value="1"/>
</dbReference>
<dbReference type="FunFam" id="3.50.50.60:FF:000002">
    <property type="entry name" value="tRNA uridine 5-carboxymethylaminomethyl modification enzyme MnmG"/>
    <property type="match status" value="1"/>
</dbReference>
<dbReference type="Gene3D" id="3.50.50.60">
    <property type="entry name" value="FAD/NAD(P)-binding domain"/>
    <property type="match status" value="2"/>
</dbReference>
<dbReference type="Gene3D" id="1.10.150.570">
    <property type="entry name" value="GidA associated domain, C-terminal subdomain"/>
    <property type="match status" value="1"/>
</dbReference>
<dbReference type="Gene3D" id="1.10.10.1800">
    <property type="entry name" value="tRNA uridine 5-carboxymethylaminomethyl modification enzyme MnmG/GidA"/>
    <property type="match status" value="1"/>
</dbReference>
<dbReference type="HAMAP" id="MF_00129">
    <property type="entry name" value="MnmG_GidA"/>
    <property type="match status" value="1"/>
</dbReference>
<dbReference type="InterPro" id="IPR036188">
    <property type="entry name" value="FAD/NAD-bd_sf"/>
</dbReference>
<dbReference type="InterPro" id="IPR049312">
    <property type="entry name" value="GIDA_C_N"/>
</dbReference>
<dbReference type="InterPro" id="IPR004416">
    <property type="entry name" value="MnmG"/>
</dbReference>
<dbReference type="InterPro" id="IPR002218">
    <property type="entry name" value="MnmG-rel"/>
</dbReference>
<dbReference type="InterPro" id="IPR020595">
    <property type="entry name" value="MnmG-rel_CS"/>
</dbReference>
<dbReference type="InterPro" id="IPR026904">
    <property type="entry name" value="MnmG_C"/>
</dbReference>
<dbReference type="InterPro" id="IPR047001">
    <property type="entry name" value="MnmG_C_subdom"/>
</dbReference>
<dbReference type="InterPro" id="IPR044920">
    <property type="entry name" value="MnmG_C_subdom_sf"/>
</dbReference>
<dbReference type="InterPro" id="IPR040131">
    <property type="entry name" value="MnmG_N"/>
</dbReference>
<dbReference type="NCBIfam" id="TIGR00136">
    <property type="entry name" value="mnmG_gidA"/>
    <property type="match status" value="1"/>
</dbReference>
<dbReference type="PANTHER" id="PTHR11806">
    <property type="entry name" value="GLUCOSE INHIBITED DIVISION PROTEIN A"/>
    <property type="match status" value="1"/>
</dbReference>
<dbReference type="PANTHER" id="PTHR11806:SF0">
    <property type="entry name" value="PROTEIN MTO1 HOMOLOG, MITOCHONDRIAL"/>
    <property type="match status" value="1"/>
</dbReference>
<dbReference type="Pfam" id="PF01134">
    <property type="entry name" value="GIDA"/>
    <property type="match status" value="1"/>
</dbReference>
<dbReference type="Pfam" id="PF21680">
    <property type="entry name" value="GIDA_C_1st"/>
    <property type="match status" value="1"/>
</dbReference>
<dbReference type="Pfam" id="PF13932">
    <property type="entry name" value="SAM_GIDA_C"/>
    <property type="match status" value="1"/>
</dbReference>
<dbReference type="SMART" id="SM01228">
    <property type="entry name" value="GIDA_assoc_3"/>
    <property type="match status" value="1"/>
</dbReference>
<dbReference type="SUPFAM" id="SSF51905">
    <property type="entry name" value="FAD/NAD(P)-binding domain"/>
    <property type="match status" value="1"/>
</dbReference>
<dbReference type="PROSITE" id="PS01280">
    <property type="entry name" value="GIDA_1"/>
    <property type="match status" value="1"/>
</dbReference>
<dbReference type="PROSITE" id="PS01281">
    <property type="entry name" value="GIDA_2"/>
    <property type="match status" value="1"/>
</dbReference>
<name>MNMG_MYCPU</name>
<proteinExistence type="inferred from homology"/>
<evidence type="ECO:0000255" key="1">
    <source>
        <dbReference type="HAMAP-Rule" id="MF_00129"/>
    </source>
</evidence>
<feature type="chain" id="PRO_0000117138" description="tRNA uridine 5-carboxymethylaminomethyl modification enzyme MnmG">
    <location>
        <begin position="1"/>
        <end position="611"/>
    </location>
</feature>
<feature type="binding site" evidence="1">
    <location>
        <begin position="12"/>
        <end position="17"/>
    </location>
    <ligand>
        <name>FAD</name>
        <dbReference type="ChEBI" id="CHEBI:57692"/>
    </ligand>
</feature>
<feature type="binding site" evidence="1">
    <location>
        <begin position="271"/>
        <end position="285"/>
    </location>
    <ligand>
        <name>NAD(+)</name>
        <dbReference type="ChEBI" id="CHEBI:57540"/>
    </ligand>
</feature>
<gene>
    <name evidence="1" type="primary">mnmG</name>
    <name evidence="1" type="synonym">gidA</name>
    <name type="ordered locus">MYPU_2530</name>
</gene>
<organism>
    <name type="scientific">Mycoplasmopsis pulmonis (strain UAB CTIP)</name>
    <name type="common">Mycoplasma pulmonis</name>
    <dbReference type="NCBI Taxonomy" id="272635"/>
    <lineage>
        <taxon>Bacteria</taxon>
        <taxon>Bacillati</taxon>
        <taxon>Mycoplasmatota</taxon>
        <taxon>Mycoplasmoidales</taxon>
        <taxon>Metamycoplasmataceae</taxon>
        <taxon>Mycoplasmopsis</taxon>
    </lineage>
</organism>
<comment type="function">
    <text evidence="1">NAD-binding protein involved in the addition of a carboxymethylaminomethyl (cmnm) group at the wobble position (U34) of certain tRNAs, forming tRNA-cmnm(5)s(2)U34.</text>
</comment>
<comment type="cofactor">
    <cofactor evidence="1">
        <name>FAD</name>
        <dbReference type="ChEBI" id="CHEBI:57692"/>
    </cofactor>
</comment>
<comment type="subunit">
    <text evidence="1">Homodimer. Heterotetramer of two MnmE and two MnmG subunits.</text>
</comment>
<comment type="subcellular location">
    <subcellularLocation>
        <location evidence="1">Cytoplasm</location>
    </subcellularLocation>
</comment>
<comment type="similarity">
    <text evidence="1">Belongs to the MnmG family.</text>
</comment>
<keyword id="KW-0963">Cytoplasm</keyword>
<keyword id="KW-0274">FAD</keyword>
<keyword id="KW-0285">Flavoprotein</keyword>
<keyword id="KW-0520">NAD</keyword>
<keyword id="KW-1185">Reference proteome</keyword>
<keyword id="KW-0819">tRNA processing</keyword>
<reference key="1">
    <citation type="journal article" date="2001" name="Nucleic Acids Res.">
        <title>The complete genome sequence of the murine respiratory pathogen Mycoplasma pulmonis.</title>
        <authorList>
            <person name="Chambaud I."/>
            <person name="Heilig R."/>
            <person name="Ferris S."/>
            <person name="Barbe V."/>
            <person name="Samson D."/>
            <person name="Galisson F."/>
            <person name="Moszer I."/>
            <person name="Dybvig K."/>
            <person name="Wroblewski H."/>
            <person name="Viari A."/>
            <person name="Rocha E.P.C."/>
            <person name="Blanchard A."/>
        </authorList>
    </citation>
    <scope>NUCLEOTIDE SEQUENCE [LARGE SCALE GENOMIC DNA]</scope>
    <source>
        <strain>UAB CTIP</strain>
    </source>
</reference>
<protein>
    <recommendedName>
        <fullName evidence="1">tRNA uridine 5-carboxymethylaminomethyl modification enzyme MnmG</fullName>
    </recommendedName>
    <alternativeName>
        <fullName evidence="1">Glucose-inhibited division protein A</fullName>
    </alternativeName>
</protein>
<sequence>MIRKNFDVIVIGGGHAGVEATFALAKMNLKVALITIYKDKIGAMPCNPSIGGPAKGIITKEIDALGGVQGYYADKAMIQVKMLNESKGPSVRAIRAQIDKEKYSEIIVKDLLQNENVTIFEDFATDLIVENDQIVGVELEKNKTISSNLVVMTTGTYMNSRILRGSDIEHTGPNGEKTGIGLSKALERLGFELIRLKTGTPPRIYSDSIDFSKVEEEVLDVNGYVFSPRSNVKIDKQIHCYLTYTNEKTHKIIQDNINKSAMYSQLIEGTGPRYCPSVEDKIMKFADKERHQIFFEPETSRQDIMYINGLSTSFPVEVQKQIVKTIPGLENARVKIWGYAIEYDAINPLQLKKSLESKKIKGLFLAGQINGTSGYEEAAAQGLIAGINAGLKFKGEDEIVIQRNHGYIGVLIDDLVTKGTQEPYRMLTSRAEYRLLLRNDNVDIRLAHYGLKAHLISQQDYQKILEKYKKIDEKIEELKTKFVSSKTDFAQKYKIENGISYFQALTRPDIEPSDLIKDFEFLNEMTIQIRLEGYIKKQNNAAAKMERLENLKIPEKIDYSQILNLANEAREKFNKIRPQTIGQASRISGINPADIQMLLFYLDLKKSKHEN</sequence>
<accession>Q98QV8</accession>